<sequence>MSSNNRKKLLLMGRSGSGKSSMRSIIFSNYSAFDTRRLGATIDVEHSHLRFLGNMTLNLWDCGGQDVFMENYFTKQKDHIFQMVQVLIHVFDVESTEVLKDIEIFAKALKQLRKYSPDAKIFVLLHKMDLVQLDKREELFQIMMKNLSETSSEFGFPNLIGFPTSIWDESLYKAWSQIVCSLIPNMSNHQSNLKKFKEIMNALEIILFERTTFLVICSSNGENSNENHDSSDNNNVLLDPKRFEKISNIMKNFKQSCTKLKSGFKTLILNNNIYVSELSSNMVCFIVLKDMNIPQELVLENIKKAKEFFQ</sequence>
<feature type="chain" id="PRO_0000122486" description="GTP-binding protein GTR1">
    <location>
        <begin position="1"/>
        <end position="310"/>
    </location>
</feature>
<feature type="binding site" evidence="5 13">
    <location>
        <position position="15"/>
    </location>
    <ligand>
        <name>GTP</name>
        <dbReference type="ChEBI" id="CHEBI:37565"/>
    </ligand>
</feature>
<feature type="binding site" evidence="5 13">
    <location>
        <position position="18"/>
    </location>
    <ligand>
        <name>GTP</name>
        <dbReference type="ChEBI" id="CHEBI:37565"/>
    </ligand>
</feature>
<feature type="binding site" evidence="5 13">
    <location>
        <position position="19"/>
    </location>
    <ligand>
        <name>GTP</name>
        <dbReference type="ChEBI" id="CHEBI:37565"/>
    </ligand>
</feature>
<feature type="binding site" evidence="5 13">
    <location>
        <position position="20"/>
    </location>
    <ligand>
        <name>GTP</name>
        <dbReference type="ChEBI" id="CHEBI:37565"/>
    </ligand>
</feature>
<feature type="binding site" evidence="5 13">
    <location>
        <position position="21"/>
    </location>
    <ligand>
        <name>GTP</name>
        <dbReference type="ChEBI" id="CHEBI:37565"/>
    </ligand>
</feature>
<feature type="binding site" evidence="5 13">
    <location>
        <position position="35"/>
    </location>
    <ligand>
        <name>GTP</name>
        <dbReference type="ChEBI" id="CHEBI:37565"/>
    </ligand>
</feature>
<feature type="binding site" evidence="5 13">
    <location>
        <position position="41"/>
    </location>
    <ligand>
        <name>GTP</name>
        <dbReference type="ChEBI" id="CHEBI:37565"/>
    </ligand>
</feature>
<feature type="binding site" evidence="5 13">
    <location>
        <position position="64"/>
    </location>
    <ligand>
        <name>GTP</name>
        <dbReference type="ChEBI" id="CHEBI:37565"/>
    </ligand>
</feature>
<feature type="binding site" evidence="5 13">
    <location>
        <position position="126"/>
    </location>
    <ligand>
        <name>GTP</name>
        <dbReference type="ChEBI" id="CHEBI:37565"/>
    </ligand>
</feature>
<feature type="binding site" evidence="5 13">
    <location>
        <position position="129"/>
    </location>
    <ligand>
        <name>GTP</name>
        <dbReference type="ChEBI" id="CHEBI:37565"/>
    </ligand>
</feature>
<feature type="binding site" evidence="5 13">
    <location>
        <position position="166"/>
    </location>
    <ligand>
        <name>GTP</name>
        <dbReference type="ChEBI" id="CHEBI:37565"/>
    </ligand>
</feature>
<feature type="mutagenesis site" description="Sensitive to high hydrostatic pressure." evidence="10">
    <original>S</original>
    <variation>L</variation>
    <location>
        <position position="20"/>
    </location>
</feature>
<feature type="strand" evidence="15">
    <location>
        <begin position="5"/>
        <end position="7"/>
    </location>
</feature>
<feature type="strand" evidence="14">
    <location>
        <begin position="8"/>
        <end position="12"/>
    </location>
</feature>
<feature type="helix" evidence="14">
    <location>
        <begin position="19"/>
        <end position="27"/>
    </location>
</feature>
<feature type="helix" evidence="14">
    <location>
        <begin position="33"/>
        <end position="37"/>
    </location>
</feature>
<feature type="strand" evidence="14">
    <location>
        <begin position="43"/>
        <end position="51"/>
    </location>
</feature>
<feature type="turn" evidence="14">
    <location>
        <begin position="52"/>
        <end position="54"/>
    </location>
</feature>
<feature type="strand" evidence="14">
    <location>
        <begin position="55"/>
        <end position="62"/>
    </location>
</feature>
<feature type="helix" evidence="14">
    <location>
        <begin position="66"/>
        <end position="73"/>
    </location>
</feature>
<feature type="turn" evidence="14">
    <location>
        <begin position="74"/>
        <end position="76"/>
    </location>
</feature>
<feature type="helix" evidence="14">
    <location>
        <begin position="77"/>
        <end position="81"/>
    </location>
</feature>
<feature type="strand" evidence="14">
    <location>
        <begin position="85"/>
        <end position="92"/>
    </location>
</feature>
<feature type="helix" evidence="14">
    <location>
        <begin position="98"/>
        <end position="115"/>
    </location>
</feature>
<feature type="strand" evidence="14">
    <location>
        <begin position="120"/>
        <end position="126"/>
    </location>
</feature>
<feature type="helix" evidence="14">
    <location>
        <begin position="128"/>
        <end position="130"/>
    </location>
</feature>
<feature type="helix" evidence="14">
    <location>
        <begin position="133"/>
        <end position="152"/>
    </location>
</feature>
<feature type="turn" evidence="14">
    <location>
        <begin position="153"/>
        <end position="155"/>
    </location>
</feature>
<feature type="strand" evidence="14">
    <location>
        <begin position="160"/>
        <end position="163"/>
    </location>
</feature>
<feature type="helix" evidence="14">
    <location>
        <begin position="170"/>
        <end position="180"/>
    </location>
</feature>
<feature type="helix" evidence="14">
    <location>
        <begin position="186"/>
        <end position="200"/>
    </location>
</feature>
<feature type="strand" evidence="14">
    <location>
        <begin position="202"/>
        <end position="209"/>
    </location>
</feature>
<feature type="turn" evidence="14">
    <location>
        <begin position="210"/>
        <end position="212"/>
    </location>
</feature>
<feature type="strand" evidence="14">
    <location>
        <begin position="215"/>
        <end position="218"/>
    </location>
</feature>
<feature type="helix" evidence="14">
    <location>
        <begin position="242"/>
        <end position="257"/>
    </location>
</feature>
<feature type="helix" evidence="14">
    <location>
        <begin position="258"/>
        <end position="260"/>
    </location>
</feature>
<feature type="strand" evidence="14">
    <location>
        <begin position="264"/>
        <end position="269"/>
    </location>
</feature>
<feature type="turn" evidence="14">
    <location>
        <begin position="270"/>
        <end position="272"/>
    </location>
</feature>
<feature type="strand" evidence="14">
    <location>
        <begin position="273"/>
        <end position="279"/>
    </location>
</feature>
<feature type="strand" evidence="14">
    <location>
        <begin position="282"/>
        <end position="289"/>
    </location>
</feature>
<feature type="helix" evidence="14">
    <location>
        <begin position="295"/>
        <end position="301"/>
    </location>
</feature>
<feature type="turn" evidence="14">
    <location>
        <begin position="302"/>
        <end position="305"/>
    </location>
</feature>
<protein>
    <recommendedName>
        <fullName evidence="12">GTP-binding protein GTR1</fullName>
        <ecNumber evidence="1">3.6.5.-</ecNumber>
    </recommendedName>
</protein>
<reference key="1">
    <citation type="journal article" date="1992" name="Mol. Cell. Biol.">
        <title>Putative GTP-binding protein, Gtr1, associated with the function of the Pho84 inorganic phosphate transporter in Saccharomyces cerevisiae.</title>
        <authorList>
            <person name="Bun-Ya M."/>
            <person name="Harashima S."/>
            <person name="Oshima Y."/>
        </authorList>
    </citation>
    <scope>NUCLEOTIDE SEQUENCE [GENOMIC DNA]</scope>
    <scope>FUNCTION</scope>
</reference>
<reference key="2">
    <citation type="journal article" date="1997" name="Nature">
        <title>The nucleotide sequence of Saccharomyces cerevisiae chromosome XIII.</title>
        <authorList>
            <person name="Bowman S."/>
            <person name="Churcher C.M."/>
            <person name="Badcock K."/>
            <person name="Brown D."/>
            <person name="Chillingworth T."/>
            <person name="Connor R."/>
            <person name="Dedman K."/>
            <person name="Devlin K."/>
            <person name="Gentles S."/>
            <person name="Hamlin N."/>
            <person name="Hunt S."/>
            <person name="Jagels K."/>
            <person name="Lye G."/>
            <person name="Moule S."/>
            <person name="Odell C."/>
            <person name="Pearson D."/>
            <person name="Rajandream M.A."/>
            <person name="Rice P."/>
            <person name="Skelton J."/>
            <person name="Walsh S.V."/>
            <person name="Whitehead S."/>
            <person name="Barrell B.G."/>
        </authorList>
    </citation>
    <scope>NUCLEOTIDE SEQUENCE [LARGE SCALE GENOMIC DNA]</scope>
    <source>
        <strain>ATCC 204508 / S288c</strain>
    </source>
</reference>
<reference key="3">
    <citation type="journal article" date="2014" name="G3 (Bethesda)">
        <title>The reference genome sequence of Saccharomyces cerevisiae: Then and now.</title>
        <authorList>
            <person name="Engel S.R."/>
            <person name="Dietrich F.S."/>
            <person name="Fisk D.G."/>
            <person name="Binkley G."/>
            <person name="Balakrishnan R."/>
            <person name="Costanzo M.C."/>
            <person name="Dwight S.S."/>
            <person name="Hitz B.C."/>
            <person name="Karra K."/>
            <person name="Nash R.S."/>
            <person name="Weng S."/>
            <person name="Wong E.D."/>
            <person name="Lloyd P."/>
            <person name="Skrzypek M.S."/>
            <person name="Miyasato S.R."/>
            <person name="Simison M."/>
            <person name="Cherry J.M."/>
        </authorList>
    </citation>
    <scope>GENOME REANNOTATION</scope>
    <source>
        <strain>ATCC 204508 / S288c</strain>
    </source>
</reference>
<reference key="4">
    <citation type="journal article" date="2007" name="Genome Res.">
        <title>Approaching a complete repository of sequence-verified protein-encoding clones for Saccharomyces cerevisiae.</title>
        <authorList>
            <person name="Hu Y."/>
            <person name="Rolfs A."/>
            <person name="Bhullar B."/>
            <person name="Murthy T.V.S."/>
            <person name="Zhu C."/>
            <person name="Berger M.F."/>
            <person name="Camargo A.A."/>
            <person name="Kelley F."/>
            <person name="McCarron S."/>
            <person name="Jepson D."/>
            <person name="Richardson A."/>
            <person name="Raphael J."/>
            <person name="Moreira D."/>
            <person name="Taycher E."/>
            <person name="Zuo D."/>
            <person name="Mohr S."/>
            <person name="Kane M.F."/>
            <person name="Williamson J."/>
            <person name="Simpson A.J.G."/>
            <person name="Bulyk M.L."/>
            <person name="Harlow E."/>
            <person name="Marsischky G."/>
            <person name="Kolodner R.D."/>
            <person name="LaBaer J."/>
        </authorList>
    </citation>
    <scope>NUCLEOTIDE SEQUENCE [GENOMIC DNA]</scope>
    <source>
        <strain>ATCC 204508 / S288c</strain>
    </source>
</reference>
<reference key="5">
    <citation type="journal article" date="2003" name="Nature">
        <title>Global analysis of protein expression in yeast.</title>
        <authorList>
            <person name="Ghaemmaghami S."/>
            <person name="Huh W.-K."/>
            <person name="Bower K."/>
            <person name="Howson R.W."/>
            <person name="Belle A."/>
            <person name="Dephoure N."/>
            <person name="O'Shea E.K."/>
            <person name="Weissman J.S."/>
        </authorList>
    </citation>
    <scope>LEVEL OF PROTEIN EXPRESSION [LARGE SCALE ANALYSIS]</scope>
</reference>
<reference key="6">
    <citation type="journal article" date="2006" name="Nat. Cell Biol.">
        <title>A conserved GTPase-containing complex is required for intracellular sorting of the general amino-acid permease in yeast.</title>
        <authorList>
            <person name="Gao M."/>
            <person name="Kaiser C.A."/>
        </authorList>
    </citation>
    <scope>FUNCTION</scope>
    <scope>IDENTIFICATION BY MASS SPECTROMETRY</scope>
    <scope>IDENTIFICATION IN THE GSE COMPLEX</scope>
</reference>
<reference key="7">
    <citation type="journal article" date="2015" name="Mol. Biol. Cell">
        <title>A LAPF/phafin1-like protein regulates TORC1 and lysosomal membrane permeabilization in response to endoplasmic reticulum membrane stress.</title>
        <authorList>
            <person name="Kim A."/>
            <person name="Cunningham K.W."/>
        </authorList>
    </citation>
    <scope>FUNCTION</scope>
    <scope>DISRUPTION PHENOTYPE</scope>
</reference>
<reference evidence="12" key="8">
    <citation type="journal article" date="2017" name="J. Cell Sci.">
        <title>Pib2 and the EGO complex are both required for activation of TORC1.</title>
        <authorList>
            <person name="Varlakhanova N.V."/>
            <person name="Mihalevic M.J."/>
            <person name="Bernstein K.A."/>
            <person name="Ford M.G.J."/>
        </authorList>
    </citation>
    <scope>FUNCTION</scope>
    <scope>SUBCELLULAR LOCATION</scope>
    <scope>DISRUPTION PHENOTYPE</scope>
    <source>
        <strain evidence="11">ATCC 200060 / W303</strain>
    </source>
</reference>
<reference key="9">
    <citation type="journal article" date="2017" name="Mol. Cell. Biol.">
        <title>An In vitro TORC1 kinase assay that recapitulates the Gtr-independent glutamine-responsive TORC1 activation mechanism on yeast vacuoles.</title>
        <authorList>
            <person name="Tanigawa M."/>
            <person name="Maeda T."/>
        </authorList>
    </citation>
    <scope>DISRUPTION PHENOTYPE</scope>
</reference>
<reference key="10">
    <citation type="journal article" date="2018" name="PLoS Genet.">
        <title>Gtr/Ego-independent TORC1 activation is achieved through a glutamine-sensitive interaction with Pib2 on the vacuolar membrane.</title>
        <authorList>
            <person name="Ukai H."/>
            <person name="Araki Y."/>
            <person name="Kira S."/>
            <person name="Oikawa Y."/>
            <person name="May A.I."/>
            <person name="Noda T."/>
        </authorList>
    </citation>
    <scope>INTERACTION WITH TOR1</scope>
    <scope>DISRUPTION PHENOTYPE</scope>
</reference>
<reference key="11">
    <citation type="journal article" date="2020" name="J. Cell Sci.">
        <title>Amino acid homeostatic control by TORC1 in Saccharomyces cerevisiae under high hydrostatic pressure.</title>
        <authorList>
            <person name="Uemura S."/>
            <person name="Mochizuki T."/>
            <person name="Amemiya K."/>
            <person name="Kurosaka G."/>
            <person name="Yazawa M."/>
            <person name="Nakamoto K."/>
            <person name="Ishikawa Y."/>
            <person name="Izawa S."/>
            <person name="Abe F."/>
        </authorList>
    </citation>
    <scope>FUNCTION</scope>
    <scope>DISRUPTION PHENOTYPE</scope>
    <scope>MUTAGENESIS OF SER-20</scope>
</reference>
<reference evidence="13" key="12">
    <citation type="journal article" date="2011" name="Genes Dev.">
        <title>Crystal structure of the Gtr1p-Gtr2p complex reveals new insights into the amino acid-induced TORC1 activation.</title>
        <authorList>
            <person name="Gong R."/>
            <person name="Li L."/>
            <person name="Liu Y."/>
            <person name="Wang P."/>
            <person name="Yang H."/>
            <person name="Wang L."/>
            <person name="Cheng J."/>
            <person name="Guan K.L."/>
            <person name="Xu Y."/>
        </authorList>
    </citation>
    <scope>X-RAY CRYSTALLOGRAPHY (2.77 ANGSTROMS) OF 8-310 IN COMPLEX WITH GTP AND GTR2</scope>
    <scope>INTERACTION WITH GTR2</scope>
</reference>
<evidence type="ECO:0000250" key="1">
    <source>
        <dbReference type="UniProtKB" id="Q7L523"/>
    </source>
</evidence>
<evidence type="ECO:0000269" key="2">
    <source>
    </source>
</evidence>
<evidence type="ECO:0000269" key="3">
    <source>
    </source>
</evidence>
<evidence type="ECO:0000269" key="4">
    <source>
    </source>
</evidence>
<evidence type="ECO:0000269" key="5">
    <source>
    </source>
</evidence>
<evidence type="ECO:0000269" key="6">
    <source>
    </source>
</evidence>
<evidence type="ECO:0000269" key="7">
    <source>
    </source>
</evidence>
<evidence type="ECO:0000269" key="8">
    <source>
    </source>
</evidence>
<evidence type="ECO:0000269" key="9">
    <source>
    </source>
</evidence>
<evidence type="ECO:0000269" key="10">
    <source>
    </source>
</evidence>
<evidence type="ECO:0000303" key="11">
    <source>
    </source>
</evidence>
<evidence type="ECO:0000305" key="12"/>
<evidence type="ECO:0007744" key="13">
    <source>
        <dbReference type="PDB" id="3R7W"/>
    </source>
</evidence>
<evidence type="ECO:0007829" key="14">
    <source>
        <dbReference type="PDB" id="3R7W"/>
    </source>
</evidence>
<evidence type="ECO:0007829" key="15">
    <source>
        <dbReference type="PDB" id="6JWP"/>
    </source>
</evidence>
<accession>Q00582</accession>
<accession>D6W0G3</accession>
<name>RAGAB_YEAST</name>
<organism>
    <name type="scientific">Saccharomyces cerevisiae (strain ATCC 204508 / S288c)</name>
    <name type="common">Baker's yeast</name>
    <dbReference type="NCBI Taxonomy" id="559292"/>
    <lineage>
        <taxon>Eukaryota</taxon>
        <taxon>Fungi</taxon>
        <taxon>Dikarya</taxon>
        <taxon>Ascomycota</taxon>
        <taxon>Saccharomycotina</taxon>
        <taxon>Saccharomycetes</taxon>
        <taxon>Saccharomycetales</taxon>
        <taxon>Saccharomycetaceae</taxon>
        <taxon>Saccharomyces</taxon>
    </lineage>
</organism>
<dbReference type="EC" id="3.6.5.-" evidence="1"/>
<dbReference type="EMBL" id="D10018">
    <property type="protein sequence ID" value="BAA00907.1"/>
    <property type="molecule type" value="Genomic_DNA"/>
</dbReference>
<dbReference type="EMBL" id="Z49218">
    <property type="protein sequence ID" value="CAA89159.1"/>
    <property type="molecule type" value="Genomic_DNA"/>
</dbReference>
<dbReference type="EMBL" id="AY692917">
    <property type="protein sequence ID" value="AAT92936.1"/>
    <property type="molecule type" value="Genomic_DNA"/>
</dbReference>
<dbReference type="EMBL" id="BK006946">
    <property type="protein sequence ID" value="DAA09777.1"/>
    <property type="molecule type" value="Genomic_DNA"/>
</dbReference>
<dbReference type="PIR" id="S31303">
    <property type="entry name" value="S31303"/>
</dbReference>
<dbReference type="RefSeq" id="NP_013585.1">
    <property type="nucleotide sequence ID" value="NM_001182484.1"/>
</dbReference>
<dbReference type="PDB" id="3R7W">
    <property type="method" value="X-ray"/>
    <property type="resolution" value="2.77 A"/>
    <property type="chains" value="A/C=8-310"/>
</dbReference>
<dbReference type="PDB" id="4ARZ">
    <property type="method" value="X-ray"/>
    <property type="resolution" value="3.10 A"/>
    <property type="chains" value="A=1-310"/>
</dbReference>
<dbReference type="PDB" id="6JWP">
    <property type="method" value="X-ray"/>
    <property type="resolution" value="3.20 A"/>
    <property type="chains" value="A/F=1-310"/>
</dbReference>
<dbReference type="PDBsum" id="3R7W"/>
<dbReference type="PDBsum" id="4ARZ"/>
<dbReference type="PDBsum" id="6JWP"/>
<dbReference type="SMR" id="Q00582"/>
<dbReference type="BioGRID" id="35083">
    <property type="interactions" value="441"/>
</dbReference>
<dbReference type="ComplexPortal" id="CPX-3172">
    <property type="entry name" value="EGO complex"/>
</dbReference>
<dbReference type="ComplexPortal" id="CPX-3233">
    <property type="entry name" value="GSE complex"/>
</dbReference>
<dbReference type="DIP" id="DIP-1358N"/>
<dbReference type="FunCoup" id="Q00582">
    <property type="interactions" value="345"/>
</dbReference>
<dbReference type="IntAct" id="Q00582">
    <property type="interactions" value="22"/>
</dbReference>
<dbReference type="MINT" id="Q00582"/>
<dbReference type="STRING" id="4932.YML121W"/>
<dbReference type="PaxDb" id="4932-YML121W"/>
<dbReference type="PeptideAtlas" id="Q00582"/>
<dbReference type="EnsemblFungi" id="YML121W_mRNA">
    <property type="protein sequence ID" value="YML121W"/>
    <property type="gene ID" value="YML121W"/>
</dbReference>
<dbReference type="GeneID" id="854918"/>
<dbReference type="KEGG" id="sce:YML121W"/>
<dbReference type="AGR" id="SGD:S000004590"/>
<dbReference type="SGD" id="S000004590">
    <property type="gene designation" value="GTR1"/>
</dbReference>
<dbReference type="VEuPathDB" id="FungiDB:YML121W"/>
<dbReference type="eggNOG" id="KOG3886">
    <property type="taxonomic scope" value="Eukaryota"/>
</dbReference>
<dbReference type="GeneTree" id="ENSGT00950000183031"/>
<dbReference type="HOGENOM" id="CLU_044099_0_0_1"/>
<dbReference type="InParanoid" id="Q00582"/>
<dbReference type="OMA" id="QQKDHIF"/>
<dbReference type="OrthoDB" id="10020193at2759"/>
<dbReference type="BioCyc" id="YEAST:G3O-32701-MONOMER"/>
<dbReference type="Reactome" id="R-SCE-165159">
    <property type="pathway name" value="MTOR signalling"/>
</dbReference>
<dbReference type="Reactome" id="R-SCE-9639288">
    <property type="pathway name" value="Amino acids regulate mTORC1"/>
</dbReference>
<dbReference type="BioGRID-ORCS" id="854918">
    <property type="hits" value="8 hits in 10 CRISPR screens"/>
</dbReference>
<dbReference type="EvolutionaryTrace" id="Q00582"/>
<dbReference type="PRO" id="PR:Q00582"/>
<dbReference type="Proteomes" id="UP000002311">
    <property type="component" value="Chromosome XIII"/>
</dbReference>
<dbReference type="RNAct" id="Q00582">
    <property type="molecule type" value="protein"/>
</dbReference>
<dbReference type="GO" id="GO:0000781">
    <property type="term" value="C:chromosome, telomeric region"/>
    <property type="evidence" value="ECO:0007669"/>
    <property type="project" value="GOC"/>
</dbReference>
<dbReference type="GO" id="GO:0005737">
    <property type="term" value="C:cytoplasm"/>
    <property type="evidence" value="ECO:0000314"/>
    <property type="project" value="SGD"/>
</dbReference>
<dbReference type="GO" id="GO:0000329">
    <property type="term" value="C:fungal-type vacuole membrane"/>
    <property type="evidence" value="ECO:0000314"/>
    <property type="project" value="SGD"/>
</dbReference>
<dbReference type="GO" id="GO:1990131">
    <property type="term" value="C:Gtr1-Gtr2 GTPase complex"/>
    <property type="evidence" value="ECO:0000353"/>
    <property type="project" value="SGD"/>
</dbReference>
<dbReference type="GO" id="GO:0005770">
    <property type="term" value="C:late endosome"/>
    <property type="evidence" value="ECO:0000314"/>
    <property type="project" value="ComplexPortal"/>
</dbReference>
<dbReference type="GO" id="GO:0031902">
    <property type="term" value="C:late endosome membrane"/>
    <property type="evidence" value="ECO:0000314"/>
    <property type="project" value="SGD"/>
</dbReference>
<dbReference type="GO" id="GO:0005634">
    <property type="term" value="C:nucleus"/>
    <property type="evidence" value="ECO:0000314"/>
    <property type="project" value="SGD"/>
</dbReference>
<dbReference type="GO" id="GO:0071986">
    <property type="term" value="C:Ragulator complex"/>
    <property type="evidence" value="ECO:0000314"/>
    <property type="project" value="SGD"/>
</dbReference>
<dbReference type="GO" id="GO:0005525">
    <property type="term" value="F:GTP binding"/>
    <property type="evidence" value="ECO:0000318"/>
    <property type="project" value="GO_Central"/>
</dbReference>
<dbReference type="GO" id="GO:0003924">
    <property type="term" value="F:GTPase activity"/>
    <property type="evidence" value="ECO:0000314"/>
    <property type="project" value="SGD"/>
</dbReference>
<dbReference type="GO" id="GO:0042802">
    <property type="term" value="F:identical protein binding"/>
    <property type="evidence" value="ECO:0000353"/>
    <property type="project" value="IntAct"/>
</dbReference>
<dbReference type="GO" id="GO:0071230">
    <property type="term" value="P:cellular response to amino acid stimulus"/>
    <property type="evidence" value="ECO:0000315"/>
    <property type="project" value="SGD"/>
</dbReference>
<dbReference type="GO" id="GO:0006995">
    <property type="term" value="P:cellular response to nitrogen starvation"/>
    <property type="evidence" value="ECO:0000315"/>
    <property type="project" value="SGD"/>
</dbReference>
<dbReference type="GO" id="GO:0034599">
    <property type="term" value="P:cellular response to oxidative stress"/>
    <property type="evidence" value="ECO:0000315"/>
    <property type="project" value="SGD"/>
</dbReference>
<dbReference type="GO" id="GO:0009267">
    <property type="term" value="P:cellular response to starvation"/>
    <property type="evidence" value="ECO:0000318"/>
    <property type="project" value="GO_Central"/>
</dbReference>
<dbReference type="GO" id="GO:0032456">
    <property type="term" value="P:endocytic recycling"/>
    <property type="evidence" value="ECO:0000314"/>
    <property type="project" value="ComplexPortal"/>
</dbReference>
<dbReference type="GO" id="GO:0016237">
    <property type="term" value="P:microautophagy"/>
    <property type="evidence" value="ECO:0000303"/>
    <property type="project" value="ComplexPortal"/>
</dbReference>
<dbReference type="GO" id="GO:0010507">
    <property type="term" value="P:negative regulation of autophagy"/>
    <property type="evidence" value="ECO:0000315"/>
    <property type="project" value="SGD"/>
</dbReference>
<dbReference type="GO" id="GO:0006817">
    <property type="term" value="P:phosphate ion transport"/>
    <property type="evidence" value="ECO:0000315"/>
    <property type="project" value="SGD"/>
</dbReference>
<dbReference type="GO" id="GO:0032008">
    <property type="term" value="P:positive regulation of TOR signaling"/>
    <property type="evidence" value="ECO:0000303"/>
    <property type="project" value="ComplexPortal"/>
</dbReference>
<dbReference type="GO" id="GO:1904263">
    <property type="term" value="P:positive regulation of TORC1 signaling"/>
    <property type="evidence" value="ECO:0000314"/>
    <property type="project" value="SGD"/>
</dbReference>
<dbReference type="GO" id="GO:1903778">
    <property type="term" value="P:protein localization to vacuolar membrane"/>
    <property type="evidence" value="ECO:0000315"/>
    <property type="project" value="SGD"/>
</dbReference>
<dbReference type="GO" id="GO:0031509">
    <property type="term" value="P:subtelomeric heterochromatin formation"/>
    <property type="evidence" value="ECO:0000315"/>
    <property type="project" value="SGD"/>
</dbReference>
<dbReference type="GO" id="GO:0006360">
    <property type="term" value="P:transcription by RNA polymerase I"/>
    <property type="evidence" value="ECO:0000315"/>
    <property type="project" value="SGD"/>
</dbReference>
<dbReference type="GO" id="GO:0006383">
    <property type="term" value="P:transcription by RNA polymerase III"/>
    <property type="evidence" value="ECO:0000315"/>
    <property type="project" value="SGD"/>
</dbReference>
<dbReference type="CDD" id="cd11384">
    <property type="entry name" value="RagA_like"/>
    <property type="match status" value="1"/>
</dbReference>
<dbReference type="FunFam" id="3.30.450.190:FF:000006">
    <property type="entry name" value="GTR1p Cytoplasmic GTPase"/>
    <property type="match status" value="1"/>
</dbReference>
<dbReference type="FunFam" id="3.40.50.300:FF:000488">
    <property type="entry name" value="Small monomeric GTPase (Gtr1)"/>
    <property type="match status" value="1"/>
</dbReference>
<dbReference type="Gene3D" id="3.30.450.190">
    <property type="match status" value="1"/>
</dbReference>
<dbReference type="Gene3D" id="3.40.50.300">
    <property type="entry name" value="P-loop containing nucleotide triphosphate hydrolases"/>
    <property type="match status" value="1"/>
</dbReference>
<dbReference type="InterPro" id="IPR006762">
    <property type="entry name" value="Gtr1_RagA"/>
</dbReference>
<dbReference type="InterPro" id="IPR027417">
    <property type="entry name" value="P-loop_NTPase"/>
</dbReference>
<dbReference type="InterPro" id="IPR039397">
    <property type="entry name" value="RagA/B"/>
</dbReference>
<dbReference type="PANTHER" id="PTHR11259">
    <property type="entry name" value="RAS-RELATED GTP BINDING RAG/GTR YEAST"/>
    <property type="match status" value="1"/>
</dbReference>
<dbReference type="PANTHER" id="PTHR11259:SF1">
    <property type="entry name" value="RAS-RELATED GTP-BINDING PROTEIN"/>
    <property type="match status" value="1"/>
</dbReference>
<dbReference type="Pfam" id="PF04670">
    <property type="entry name" value="Gtr1_RagA"/>
    <property type="match status" value="1"/>
</dbReference>
<dbReference type="SUPFAM" id="SSF52540">
    <property type="entry name" value="P-loop containing nucleoside triphosphate hydrolases"/>
    <property type="match status" value="1"/>
</dbReference>
<keyword id="KW-0002">3D-structure</keyword>
<keyword id="KW-0342">GTP-binding</keyword>
<keyword id="KW-0378">Hydrolase</keyword>
<keyword id="KW-0472">Membrane</keyword>
<keyword id="KW-0547">Nucleotide-binding</keyword>
<keyword id="KW-1185">Reference proteome</keyword>
<keyword id="KW-0926">Vacuole</keyword>
<gene>
    <name type="primary">GTR1</name>
    <name type="ordered locus">YML121W</name>
    <name type="ORF">YM7056.05</name>
</gene>
<comment type="function">
    <text evidence="3 4 6 8 10">GTPase involved in activation of the TORC1 signaling pathway, which promotes growth and represses autophagy in nutrient-rich conditions (PubMed:26510498, PubMed:28993463, PubMed:32801125). Also required for TORC1 inactivation during nitrogen starvation (PubMed:28993463). Required for intracellular sorting of GAP1 out of the endosome (PubMed:16732272). Functionally associated with the inorganic phosphate transporter PHO84, and may be involved in regulating its function or localization (PubMed:1620108).</text>
</comment>
<comment type="catalytic activity">
    <reaction evidence="1">
        <text>GTP + H2O = GDP + phosphate + H(+)</text>
        <dbReference type="Rhea" id="RHEA:19669"/>
        <dbReference type="ChEBI" id="CHEBI:15377"/>
        <dbReference type="ChEBI" id="CHEBI:15378"/>
        <dbReference type="ChEBI" id="CHEBI:37565"/>
        <dbReference type="ChEBI" id="CHEBI:43474"/>
        <dbReference type="ChEBI" id="CHEBI:58189"/>
    </reaction>
    <physiologicalReaction direction="left-to-right" evidence="1">
        <dbReference type="Rhea" id="RHEA:19670"/>
    </physiologicalReaction>
</comment>
<comment type="subunit">
    <text evidence="4 5 9">Heterodimer; with GTR2 (PubMed:21816923). Component of the GSE complex composed of GTR1, GTR2, SLM4, MEH1 and LTV1 (PubMed:16732272). Interacts with GTR2; the interaction is direct (PubMed:21816923). Interacts with TOR1 (PubMed:29698392).</text>
</comment>
<comment type="interaction">
    <interactant intactId="EBI-7954">
        <id>Q00582</id>
    </interactant>
    <interactant intactId="EBI-7954">
        <id>Q00582</id>
        <label>GTR1</label>
    </interactant>
    <organismsDiffer>false</organismsDiffer>
    <experiments>4</experiments>
</comment>
<comment type="interaction">
    <interactant intactId="EBI-7954">
        <id>Q00582</id>
    </interactant>
    <interactant intactId="EBI-7962">
        <id>P53290</id>
        <label>GTR2</label>
    </interactant>
    <organismsDiffer>false</organismsDiffer>
    <experiments>5</experiments>
</comment>
<comment type="interaction">
    <interactant intactId="EBI-7954">
        <id>Q00582</id>
    </interactant>
    <interactant intactId="EBI-27062">
        <id>Q02205</id>
        <label>MEH1</label>
    </interactant>
    <organismsDiffer>false</organismsDiffer>
    <experiments>4</experiments>
</comment>
<comment type="interaction">
    <interactant intactId="EBI-7954">
        <id>Q00582</id>
    </interactant>
    <interactant intactId="EBI-21507">
        <id>P38247</id>
        <label>SLM4</label>
    </interactant>
    <organismsDiffer>false</organismsDiffer>
    <experiments>6</experiments>
</comment>
<comment type="subcellular location">
    <subcellularLocation>
        <location evidence="8">Vacuole membrane</location>
        <topology evidence="12">Peripheral membrane protein</topology>
    </subcellularLocation>
</comment>
<comment type="disruption phenotype">
    <text evidence="6 7 8 9 10">Sensitive to rapamycin (TORC1 signaling-inhibitor) (PubMed:28993463). Decreases and delays activation of TORC1 signaling in nitrogen-replete conditions (glutamine nitrogen source) (PubMed:29698392). Abnormal punctate localization of PIB2 and TOR1 in nitrogen-replete conditions (glutamine nitrogen source) (PubMed:28993463, PubMed:29698392, PubMed:32801125). Increases cellular levels of glutamine and alanine during high hydrostatic pressure (mechanical stress) (PubMed:32801125). Sensitive to high hydrostatic pressure (PubMed:32801125). Resistance to tunicamycin (endoplasmic reticulum stressor) administered together with FK506 (calcineurin inhibitor) (PubMed:26510498). Normal localization of KOG1 and TOR1 to the vacuolar membrane (PubMed:28483912). Simultaneous disruption of PIB2 results in TOR1 mislocalization and loss of TORC1 activity and viability (PubMed:29698392).</text>
</comment>
<comment type="miscellaneous">
    <text evidence="2">Present with 907 molecules/cell in log phase SD medium.</text>
</comment>
<comment type="similarity">
    <text evidence="12">Belongs to the GTR/RAG GTP-binding protein family.</text>
</comment>
<proteinExistence type="evidence at protein level"/>